<organismHost>
    <name type="scientific">Canis lupus familiaris</name>
    <name type="common">Dog</name>
    <name type="synonym">Canis familiaris</name>
    <dbReference type="NCBI Taxonomy" id="9615"/>
</organismHost>
<organismHost>
    <name type="scientific">Chodsigoa caovansunga</name>
    <name type="common">Van Sung's shrew</name>
    <dbReference type="NCBI Taxonomy" id="269271"/>
</organismHost>
<organismHost>
    <name type="scientific">Felis catus</name>
    <name type="common">Cat</name>
    <name type="synonym">Felis silvestris catus</name>
    <dbReference type="NCBI Taxonomy" id="9685"/>
</organismHost>
<organismHost>
    <name type="scientific">Rodentia</name>
    <dbReference type="NCBI Taxonomy" id="9989"/>
</organismHost>
<name>PHOSP_MOKV</name>
<dbReference type="EMBL" id="Y09762">
    <property type="status" value="NOT_ANNOTATED_CDS"/>
    <property type="molecule type" value="Genomic_RNA"/>
</dbReference>
<dbReference type="RefSeq" id="YP_142351.1">
    <molecule id="P0C569-1"/>
    <property type="nucleotide sequence ID" value="NC_006429.1"/>
</dbReference>
<dbReference type="PDB" id="2WZL">
    <property type="method" value="X-ray"/>
    <property type="resolution" value="2.10 A"/>
    <property type="chains" value="A=1-303"/>
</dbReference>
<dbReference type="PDBsum" id="2WZL"/>
<dbReference type="SMR" id="P0C569"/>
<dbReference type="GeneID" id="3159477"/>
<dbReference type="KEGG" id="vg:3159477"/>
<dbReference type="OrthoDB" id="6918at10239"/>
<dbReference type="EvolutionaryTrace" id="P0C569"/>
<dbReference type="Proteomes" id="UP000006826">
    <property type="component" value="Segment"/>
</dbReference>
<dbReference type="GO" id="GO:0030430">
    <property type="term" value="C:host cell cytoplasm"/>
    <property type="evidence" value="ECO:0007669"/>
    <property type="project" value="UniProtKB-SubCell"/>
</dbReference>
<dbReference type="GO" id="GO:0042025">
    <property type="term" value="C:host cell nucleus"/>
    <property type="evidence" value="ECO:0007669"/>
    <property type="project" value="UniProtKB-SubCell"/>
</dbReference>
<dbReference type="GO" id="GO:0044423">
    <property type="term" value="C:virion component"/>
    <property type="evidence" value="ECO:0007669"/>
    <property type="project" value="UniProtKB-KW"/>
</dbReference>
<dbReference type="GO" id="GO:0003968">
    <property type="term" value="F:RNA-directed RNA polymerase activity"/>
    <property type="evidence" value="ECO:0007669"/>
    <property type="project" value="InterPro"/>
</dbReference>
<dbReference type="GO" id="GO:0052170">
    <property type="term" value="P:symbiont-mediated suppression of host innate immune response"/>
    <property type="evidence" value="ECO:0007669"/>
    <property type="project" value="UniProtKB-KW"/>
</dbReference>
<dbReference type="GO" id="GO:0039563">
    <property type="term" value="P:symbiont-mediated suppression of host JAK-STAT cascade via inhibition of STAT1 activity"/>
    <property type="evidence" value="ECO:0007669"/>
    <property type="project" value="UniProtKB-KW"/>
</dbReference>
<dbReference type="GO" id="GO:0039564">
    <property type="term" value="P:symbiont-mediated suppression of host JAK-STAT cascade via inhibition of STAT2 activity"/>
    <property type="evidence" value="ECO:0007669"/>
    <property type="project" value="UniProtKB-KW"/>
</dbReference>
<dbReference type="GO" id="GO:0039502">
    <property type="term" value="P:symbiont-mediated suppression of host type I interferon-mediated signaling pathway"/>
    <property type="evidence" value="ECO:0007669"/>
    <property type="project" value="UniProtKB-KW"/>
</dbReference>
<dbReference type="GO" id="GO:0019083">
    <property type="term" value="P:viral transcription"/>
    <property type="evidence" value="ECO:0007669"/>
    <property type="project" value="InterPro"/>
</dbReference>
<dbReference type="CDD" id="cd21032">
    <property type="entry name" value="RABV_P-protein-C_like"/>
    <property type="match status" value="1"/>
</dbReference>
<dbReference type="Gene3D" id="6.10.140.1560">
    <property type="match status" value="1"/>
</dbReference>
<dbReference type="Gene3D" id="1.20.120.820">
    <property type="entry name" value="Phosphoprotein, C-terminal domain"/>
    <property type="match status" value="1"/>
</dbReference>
<dbReference type="InterPro" id="IPR004259">
    <property type="entry name" value="PP_M1-like"/>
</dbReference>
<dbReference type="InterPro" id="IPR037199">
    <property type="entry name" value="PP_M1_C"/>
</dbReference>
<dbReference type="InterPro" id="IPR049506">
    <property type="entry name" value="RABV_P-like_C"/>
</dbReference>
<dbReference type="Pfam" id="PF03012">
    <property type="entry name" value="PP_M1"/>
    <property type="match status" value="1"/>
</dbReference>
<dbReference type="SUPFAM" id="SSF118173">
    <property type="entry name" value="Phosphoprotein M1, C-terminal domain"/>
    <property type="match status" value="1"/>
</dbReference>
<accession>P0C569</accession>
<protein>
    <recommendedName>
        <fullName>Phosphoprotein</fullName>
        <shortName>Protein P</shortName>
    </recommendedName>
    <alternativeName>
        <fullName>Protein M1</fullName>
    </alternativeName>
</protein>
<reference key="1">
    <citation type="journal article" date="1997" name="J. Gen. Virol.">
        <title>The complete Mokola virus genome sequence: structure of the RNA-dependent RNA polymerase.</title>
        <authorList>
            <person name="Le Mercier P."/>
            <person name="Jacob Y."/>
            <person name="Tordo N."/>
        </authorList>
    </citation>
    <scope>NUCLEOTIDE SEQUENCE [GENOMIC RNA]</scope>
</reference>
<feature type="chain" id="PRO_0000295249" description="Phosphoprotein">
    <location>
        <begin position="1"/>
        <end position="303"/>
    </location>
</feature>
<feature type="region of interest" description="Disordered" evidence="2">
    <location>
        <begin position="50"/>
        <end position="87"/>
    </location>
</feature>
<feature type="region of interest" description="Disordered" evidence="2">
    <location>
        <begin position="139"/>
        <end position="194"/>
    </location>
</feature>
<feature type="short sequence motif" description="Nuclear export signal" evidence="1">
    <location>
        <begin position="49"/>
        <end position="58"/>
    </location>
</feature>
<feature type="short sequence motif" description="Nuclear localization signal" evidence="1">
    <location>
        <begin position="212"/>
        <end position="215"/>
    </location>
</feature>
<feature type="compositionally biased region" description="Basic and acidic residues" evidence="2">
    <location>
        <begin position="52"/>
        <end position="69"/>
    </location>
</feature>
<feature type="compositionally biased region" description="Acidic residues" evidence="2">
    <location>
        <begin position="70"/>
        <end position="82"/>
    </location>
</feature>
<feature type="compositionally biased region" description="Polar residues" evidence="2">
    <location>
        <begin position="143"/>
        <end position="158"/>
    </location>
</feature>
<feature type="compositionally biased region" description="Basic and acidic residues" evidence="2">
    <location>
        <begin position="159"/>
        <end position="194"/>
    </location>
</feature>
<feature type="modified residue" description="Phosphoserine; by host PKC" evidence="1">
    <location>
        <position position="211"/>
    </location>
</feature>
<feature type="modified residue" description="Phosphoserine; by host PKC" evidence="1">
    <location>
        <position position="272"/>
    </location>
</feature>
<feature type="splice variant" id="VSP_026896" description="In isoform P3." evidence="3">
    <location>
        <begin position="1"/>
        <end position="52"/>
    </location>
</feature>
<feature type="splice variant" id="VSP_026897" description="In isoform P2." evidence="3">
    <location>
        <begin position="1"/>
        <end position="19"/>
    </location>
</feature>
<feature type="helix" evidence="4">
    <location>
        <begin position="198"/>
        <end position="208"/>
    </location>
</feature>
<feature type="turn" evidence="4">
    <location>
        <begin position="209"/>
        <end position="211"/>
    </location>
</feature>
<feature type="strand" evidence="4">
    <location>
        <begin position="214"/>
        <end position="226"/>
    </location>
</feature>
<feature type="helix" evidence="4">
    <location>
        <begin position="228"/>
        <end position="231"/>
    </location>
</feature>
<feature type="helix" evidence="4">
    <location>
        <begin position="235"/>
        <end position="242"/>
    </location>
</feature>
<feature type="helix" evidence="4">
    <location>
        <begin position="248"/>
        <end position="253"/>
    </location>
</feature>
<feature type="helix" evidence="4">
    <location>
        <begin position="260"/>
        <end position="271"/>
    </location>
</feature>
<feature type="helix" evidence="4">
    <location>
        <begin position="273"/>
        <end position="278"/>
    </location>
</feature>
<feature type="helix" evidence="4">
    <location>
        <begin position="281"/>
        <end position="300"/>
    </location>
</feature>
<comment type="function">
    <text evidence="1">Non catalytic polymerase cofactor and regulatory protein that plays a role in viral transcription and replication. Stabilizes the RNA polymerase L to the N-RNA template and binds the soluble protein N, preventing it from encapsidating non-genomic RNA. Also inhibits host IFN-alpha and IFN-beta signaling by binding and retaining phosphorylated STAT1 in the cytoplasm or by inhibiting the DNA binding of STAT1 in the nucleus (By similarity).</text>
</comment>
<comment type="subunit">
    <text evidence="1">Homotrimer when phosphorylated. This trimer is stabilized by binding to the L protein. Binds soluble protein N, and ribonucleocapsid. Interacts with host STAT1, STAT2 and PML (By similarity).</text>
</comment>
<comment type="subcellular location">
    <molecule>Phosphoprotein</molecule>
    <subcellularLocation>
        <location>Virion</location>
    </subcellularLocation>
    <subcellularLocation>
        <location evidence="1">Host cytoplasm</location>
    </subcellularLocation>
</comment>
<comment type="subcellular location">
    <molecule>Isoform P2</molecule>
    <subcellularLocation>
        <location evidence="1">Host cytoplasm</location>
    </subcellularLocation>
</comment>
<comment type="subcellular location">
    <molecule>Isoform P3</molecule>
    <subcellularLocation>
        <location evidence="1">Host nucleus</location>
    </subcellularLocation>
</comment>
<comment type="alternative products">
    <event type="alternative initiation"/>
    <isoform>
        <id>P0C569-1</id>
        <name>P</name>
        <sequence type="displayed"/>
    </isoform>
    <isoform>
        <id>P0C569-2</id>
        <name>P2</name>
        <sequence type="described" ref="VSP_026897"/>
    </isoform>
    <isoform>
        <id>P0C569-3</id>
        <name>P3</name>
        <sequence type="described" ref="VSP_026896"/>
    </isoform>
</comment>
<comment type="PTM">
    <text evidence="1">Phosphorylated by host PKC and by an unknown kinase.</text>
</comment>
<comment type="similarity">
    <text evidence="3">Belongs to the lyssavirus protein P family.</text>
</comment>
<sequence length="303" mass="34205">MSKDLVHPSLIRAGIVELEMAEETTDLINRTIESNQAHLQGEPLYVDSLPEDMSRLRIEDKSRRTKTEEEERDEGSSEEDNYLSEGQDPLIPFQNFLDEIGARAVKRLKTGEGFFRVWSALSDDIKGYVSTNIMTSGERDTKSIQIQTEPTASVSSGNESRHDSESMHDPNDKKDHTPDHDVVPDIESSTDKGEIRDIEGEVAHQVAESFSKKYKFPSRSSGIFLWNFEQLKMNLDDIVKAAMNVPGVERIAEKGGKLPLRCILGFVALDSSKRFRLLADNDKVARLIQEDINSYMARLEEAE</sequence>
<gene>
    <name type="primary">P</name>
</gene>
<organism>
    <name type="scientific">Mokola virus</name>
    <name type="common">MOKV</name>
    <dbReference type="NCBI Taxonomy" id="12538"/>
    <lineage>
        <taxon>Viruses</taxon>
        <taxon>Riboviria</taxon>
        <taxon>Orthornavirae</taxon>
        <taxon>Negarnaviricota</taxon>
        <taxon>Haploviricotina</taxon>
        <taxon>Monjiviricetes</taxon>
        <taxon>Mononegavirales</taxon>
        <taxon>Rhabdoviridae</taxon>
        <taxon>Alpharhabdovirinae</taxon>
        <taxon>Lyssavirus</taxon>
    </lineage>
</organism>
<keyword id="KW-0002">3D-structure</keyword>
<keyword id="KW-0024">Alternative initiation</keyword>
<keyword id="KW-0143">Chaperone</keyword>
<keyword id="KW-1035">Host cytoplasm</keyword>
<keyword id="KW-1048">Host nucleus</keyword>
<keyword id="KW-0945">Host-virus interaction</keyword>
<keyword id="KW-1090">Inhibition of host innate immune response by virus</keyword>
<keyword id="KW-1114">Inhibition of host interferon signaling pathway by virus</keyword>
<keyword id="KW-1105">Inhibition of host STAT1 by virus</keyword>
<keyword id="KW-1106">Inhibition of host STAT2 by virus</keyword>
<keyword id="KW-0922">Interferon antiviral system evasion</keyword>
<keyword id="KW-0597">Phosphoprotein</keyword>
<keyword id="KW-1185">Reference proteome</keyword>
<keyword id="KW-0899">Viral immunoevasion</keyword>
<keyword id="KW-0693">Viral RNA replication</keyword>
<keyword id="KW-0946">Virion</keyword>
<evidence type="ECO:0000250" key="1"/>
<evidence type="ECO:0000256" key="2">
    <source>
        <dbReference type="SAM" id="MobiDB-lite"/>
    </source>
</evidence>
<evidence type="ECO:0000305" key="3"/>
<evidence type="ECO:0007829" key="4">
    <source>
        <dbReference type="PDB" id="2WZL"/>
    </source>
</evidence>
<proteinExistence type="evidence at protein level"/>